<dbReference type="EMBL" id="AB195299">
    <property type="protein sequence ID" value="BAD98706.1"/>
    <property type="molecule type" value="Genomic_DNA"/>
</dbReference>
<dbReference type="GO" id="GO:0005829">
    <property type="term" value="C:cytosol"/>
    <property type="evidence" value="ECO:0007669"/>
    <property type="project" value="UniProtKB-ARBA"/>
</dbReference>
<dbReference type="GO" id="GO:0005882">
    <property type="term" value="C:intermediate filament"/>
    <property type="evidence" value="ECO:0007669"/>
    <property type="project" value="UniProtKB-KW"/>
</dbReference>
<dbReference type="InterPro" id="IPR007951">
    <property type="entry name" value="KRTAP_PMG"/>
</dbReference>
<dbReference type="Pfam" id="PF05287">
    <property type="entry name" value="PMG"/>
    <property type="match status" value="1"/>
</dbReference>
<accession>Q4W7H1</accession>
<reference key="1">
    <citation type="submission" date="2004-11" db="EMBL/GenBank/DDBJ databases">
        <title>Comparative analysis of KAP13.3 and KAP13.4 genes in primates.</title>
        <authorList>
            <person name="Kim H."/>
            <person name="Park E."/>
        </authorList>
    </citation>
    <scope>NUCLEOTIDE SEQUENCE [GENOMIC DNA]</scope>
</reference>
<name>KR134_HYLAG</name>
<gene>
    <name type="primary">KRTAP13-4</name>
    <name type="synonym">KAP13.4</name>
</gene>
<feature type="chain" id="PRO_0000185205" description="Keratin-associated protein 13-4">
    <location>
        <begin position="1"/>
        <end position="160"/>
    </location>
</feature>
<feature type="repeat" description="1">
    <location>
        <begin position="41"/>
        <end position="50"/>
    </location>
</feature>
<feature type="repeat" description="2">
    <location>
        <begin position="51"/>
        <end position="60"/>
    </location>
</feature>
<feature type="repeat" description="3">
    <location>
        <begin position="61"/>
        <end position="70"/>
    </location>
</feature>
<feature type="repeat" description="4">
    <location>
        <begin position="77"/>
        <end position="86"/>
    </location>
</feature>
<feature type="region of interest" description="4 X 10 AA approximate repeats">
    <location>
        <begin position="41"/>
        <end position="86"/>
    </location>
</feature>
<organism>
    <name type="scientific">Hylobates agilis</name>
    <name type="common">Agile gibbon</name>
    <dbReference type="NCBI Taxonomy" id="9579"/>
    <lineage>
        <taxon>Eukaryota</taxon>
        <taxon>Metazoa</taxon>
        <taxon>Chordata</taxon>
        <taxon>Craniata</taxon>
        <taxon>Vertebrata</taxon>
        <taxon>Euteleostomi</taxon>
        <taxon>Mammalia</taxon>
        <taxon>Eutheria</taxon>
        <taxon>Euarchontoglires</taxon>
        <taxon>Primates</taxon>
        <taxon>Haplorrhini</taxon>
        <taxon>Catarrhini</taxon>
        <taxon>Hylobatidae</taxon>
        <taxon>Hylobates</taxon>
    </lineage>
</organism>
<evidence type="ECO:0000305" key="1"/>
<proteinExistence type="inferred from homology"/>
<protein>
    <recommendedName>
        <fullName>Keratin-associated protein 13-4</fullName>
    </recommendedName>
</protein>
<comment type="function">
    <text>In the hair cortex, hair keratin intermediate filaments are embedded in an interfilamentous matrix, consisting of hair keratin-associated proteins (KRTAP), which are essential for the formation of a rigid and resistant hair shaft through their extensive disulfide bond cross-linking with abundant cysteine residues of hair keratins. The matrix proteins include the high-sulfur and high-glycine-tyrosine keratins.</text>
</comment>
<comment type="subunit">
    <text>Interacts with hair keratins.</text>
</comment>
<comment type="similarity">
    <text evidence="1">Belongs to the PMG family.</text>
</comment>
<keyword id="KW-0416">Keratin</keyword>
<keyword id="KW-0677">Repeat</keyword>
<sequence length="160" mass="17480">MSYNCCSRNFSSRSFGGYLYYPGSCPSSLVYSTALCSPSTCQLGSSLYRDCQKTCWEPASCQKSCYHPRTSMLCCPCQTTCSGSLGFGSSSCRSQGYGSRSCYSLGNGSSGFRFLKYGGCGFPSLSYGSRFCYPNYLASGAWQSSCYRPICGSRFYQFTC</sequence>